<accession>Q5PJ63</accession>
<keyword id="KW-0119">Carbohydrate metabolism</keyword>
<keyword id="KW-0210">Decarboxylase</keyword>
<keyword id="KW-0456">Lyase</keyword>
<keyword id="KW-0460">Magnesium</keyword>
<keyword id="KW-0479">Metal-binding</keyword>
<dbReference type="EC" id="4.1.1.85" evidence="1"/>
<dbReference type="EMBL" id="CP000026">
    <property type="protein sequence ID" value="AAV79940.1"/>
    <property type="molecule type" value="Genomic_DNA"/>
</dbReference>
<dbReference type="RefSeq" id="WP_000056761.1">
    <property type="nucleotide sequence ID" value="NC_006511.1"/>
</dbReference>
<dbReference type="SMR" id="Q5PJ63"/>
<dbReference type="KEGG" id="spt:SPA4203"/>
<dbReference type="HOGENOM" id="CLU_081825_0_0_6"/>
<dbReference type="UniPathway" id="UPA00263">
    <property type="reaction ID" value="UER00378"/>
</dbReference>
<dbReference type="Proteomes" id="UP000008185">
    <property type="component" value="Chromosome"/>
</dbReference>
<dbReference type="GO" id="GO:0033982">
    <property type="term" value="F:3-dehydro-L-gulonate-6-phosphate decarboxylase activity"/>
    <property type="evidence" value="ECO:0007669"/>
    <property type="project" value="UniProtKB-EC"/>
</dbReference>
<dbReference type="GO" id="GO:0000287">
    <property type="term" value="F:magnesium ion binding"/>
    <property type="evidence" value="ECO:0007669"/>
    <property type="project" value="UniProtKB-UniRule"/>
</dbReference>
<dbReference type="GO" id="GO:0004590">
    <property type="term" value="F:orotidine-5'-phosphate decarboxylase activity"/>
    <property type="evidence" value="ECO:0007669"/>
    <property type="project" value="InterPro"/>
</dbReference>
<dbReference type="GO" id="GO:0006207">
    <property type="term" value="P:'de novo' pyrimidine nucleobase biosynthetic process"/>
    <property type="evidence" value="ECO:0007669"/>
    <property type="project" value="InterPro"/>
</dbReference>
<dbReference type="GO" id="GO:0019854">
    <property type="term" value="P:L-ascorbic acid catabolic process"/>
    <property type="evidence" value="ECO:0007669"/>
    <property type="project" value="UniProtKB-UniRule"/>
</dbReference>
<dbReference type="CDD" id="cd04726">
    <property type="entry name" value="KGPDC_HPS"/>
    <property type="match status" value="1"/>
</dbReference>
<dbReference type="FunFam" id="3.20.20.70:FF:000022">
    <property type="entry name" value="3-keto-L-gulonate-6-phosphate decarboxylase UlaD"/>
    <property type="match status" value="1"/>
</dbReference>
<dbReference type="Gene3D" id="3.20.20.70">
    <property type="entry name" value="Aldolase class I"/>
    <property type="match status" value="1"/>
</dbReference>
<dbReference type="HAMAP" id="MF_01267">
    <property type="entry name" value="UlaD"/>
    <property type="match status" value="1"/>
</dbReference>
<dbReference type="InterPro" id="IPR023942">
    <property type="entry name" value="3-keto-L-gulonate6Pdecase_UlaD"/>
</dbReference>
<dbReference type="InterPro" id="IPR013785">
    <property type="entry name" value="Aldolase_TIM"/>
</dbReference>
<dbReference type="InterPro" id="IPR041710">
    <property type="entry name" value="HPS/KGPDC"/>
</dbReference>
<dbReference type="InterPro" id="IPR001754">
    <property type="entry name" value="OMPdeCOase_dom"/>
</dbReference>
<dbReference type="InterPro" id="IPR011060">
    <property type="entry name" value="RibuloseP-bd_barrel"/>
</dbReference>
<dbReference type="NCBIfam" id="NF009832">
    <property type="entry name" value="PRK13306.1"/>
    <property type="match status" value="1"/>
</dbReference>
<dbReference type="PANTHER" id="PTHR35039">
    <property type="entry name" value="3-KETO-L-GULONATE-6-PHOSPHATE DECARBOXYLASE SGBH-RELATED"/>
    <property type="match status" value="1"/>
</dbReference>
<dbReference type="PANTHER" id="PTHR35039:SF3">
    <property type="entry name" value="3-KETO-L-GULONATE-6-PHOSPHATE DECARBOXYLASE SGBH-RELATED"/>
    <property type="match status" value="1"/>
</dbReference>
<dbReference type="Pfam" id="PF00215">
    <property type="entry name" value="OMPdecase"/>
    <property type="match status" value="1"/>
</dbReference>
<dbReference type="SMART" id="SM00934">
    <property type="entry name" value="OMPdecase"/>
    <property type="match status" value="1"/>
</dbReference>
<dbReference type="SUPFAM" id="SSF51366">
    <property type="entry name" value="Ribulose-phoshate binding barrel"/>
    <property type="match status" value="1"/>
</dbReference>
<gene>
    <name evidence="1" type="primary">ulaD</name>
    <name type="ordered locus">SPA4203</name>
</gene>
<name>ULAD_SALPA</name>
<comment type="function">
    <text evidence="1">Catalyzes the decarboxylation of 3-keto-L-gulonate-6-P into L-xylulose-5-P. Is involved in the anaerobic L-ascorbate utilization.</text>
</comment>
<comment type="catalytic activity">
    <reaction evidence="1">
        <text>3-dehydro-L-gulonate 6-phosphate + H(+) = L-xylulose 5-phosphate + CO2</text>
        <dbReference type="Rhea" id="RHEA:14353"/>
        <dbReference type="ChEBI" id="CHEBI:15378"/>
        <dbReference type="ChEBI" id="CHEBI:16526"/>
        <dbReference type="ChEBI" id="CHEBI:57829"/>
        <dbReference type="ChEBI" id="CHEBI:58774"/>
        <dbReference type="EC" id="4.1.1.85"/>
    </reaction>
</comment>
<comment type="cofactor">
    <cofactor evidence="1">
        <name>Mg(2+)</name>
        <dbReference type="ChEBI" id="CHEBI:18420"/>
    </cofactor>
    <text evidence="1">Binds 1 Mg(2+) ion per subunit.</text>
</comment>
<comment type="pathway">
    <text evidence="1">Cofactor degradation; L-ascorbate degradation; D-xylulose 5-phosphate from L-ascorbate: step 2/4.</text>
</comment>
<comment type="subunit">
    <text evidence="1">Homodimer.</text>
</comment>
<comment type="induction">
    <text evidence="1">Induced by L-ascorbate. Repressed by UlaR.</text>
</comment>
<comment type="similarity">
    <text evidence="1">Belongs to the HPS/KGPDC family. KGPDC subfamily.</text>
</comment>
<feature type="chain" id="PRO_0000236092" description="3-keto-L-gulonate-6-phosphate decarboxylase UlaD">
    <location>
        <begin position="1"/>
        <end position="216"/>
    </location>
</feature>
<feature type="binding site" evidence="1">
    <location>
        <position position="11"/>
    </location>
    <ligand>
        <name>substrate</name>
    </ligand>
</feature>
<feature type="binding site" evidence="1">
    <location>
        <position position="33"/>
    </location>
    <ligand>
        <name>Mg(2+)</name>
        <dbReference type="ChEBI" id="CHEBI:18420"/>
    </ligand>
</feature>
<feature type="binding site" evidence="1">
    <location>
        <position position="62"/>
    </location>
    <ligand>
        <name>Mg(2+)</name>
        <dbReference type="ChEBI" id="CHEBI:18420"/>
    </ligand>
</feature>
<feature type="binding site" evidence="1">
    <location>
        <position position="192"/>
    </location>
    <ligand>
        <name>substrate</name>
    </ligand>
</feature>
<feature type="site" description="Transition state stabilizer" evidence="1">
    <location>
        <position position="64"/>
    </location>
</feature>
<feature type="site" description="Transition state stabilizer" evidence="1">
    <location>
        <position position="67"/>
    </location>
</feature>
<sequence length="216" mass="23706">MSLPMLQVALDNQTMDSAYETTRLIAEEVDIIEVGTILCVGEGVRAVRDLKALYPHKIVLADAKIADAGKILSRMCFEANADWVTVICCADINTAKGALDVAKEFNGDVQIELTGYWTWEQAQQWRDAGIQQVVYHRSRDAQAAGVAWGEADITAIKRLSDMGFKVTVTGGLALEDLPLFKGIPIHVFIAGRSIRDAESPVEAARQFKRSIAQLWG</sequence>
<reference key="1">
    <citation type="journal article" date="2004" name="Nat. Genet.">
        <title>Comparison of genome degradation in Paratyphi A and Typhi, human-restricted serovars of Salmonella enterica that cause typhoid.</title>
        <authorList>
            <person name="McClelland M."/>
            <person name="Sanderson K.E."/>
            <person name="Clifton S.W."/>
            <person name="Latreille P."/>
            <person name="Porwollik S."/>
            <person name="Sabo A."/>
            <person name="Meyer R."/>
            <person name="Bieri T."/>
            <person name="Ozersky P."/>
            <person name="McLellan M."/>
            <person name="Harkins C.R."/>
            <person name="Wang C."/>
            <person name="Nguyen C."/>
            <person name="Berghoff A."/>
            <person name="Elliott G."/>
            <person name="Kohlberg S."/>
            <person name="Strong C."/>
            <person name="Du F."/>
            <person name="Carter J."/>
            <person name="Kremizki C."/>
            <person name="Layman D."/>
            <person name="Leonard S."/>
            <person name="Sun H."/>
            <person name="Fulton L."/>
            <person name="Nash W."/>
            <person name="Miner T."/>
            <person name="Minx P."/>
            <person name="Delehaunty K."/>
            <person name="Fronick C."/>
            <person name="Magrini V."/>
            <person name="Nhan M."/>
            <person name="Warren W."/>
            <person name="Florea L."/>
            <person name="Spieth J."/>
            <person name="Wilson R.K."/>
        </authorList>
    </citation>
    <scope>NUCLEOTIDE SEQUENCE [LARGE SCALE GENOMIC DNA]</scope>
    <source>
        <strain>ATCC 9150 / SARB42</strain>
    </source>
</reference>
<proteinExistence type="inferred from homology"/>
<evidence type="ECO:0000255" key="1">
    <source>
        <dbReference type="HAMAP-Rule" id="MF_01267"/>
    </source>
</evidence>
<protein>
    <recommendedName>
        <fullName evidence="1">3-keto-L-gulonate-6-phosphate decarboxylase UlaD</fullName>
        <ecNumber evidence="1">4.1.1.85</ecNumber>
    </recommendedName>
    <alternativeName>
        <fullName evidence="1">3-dehydro-L-gulonate-6-phosphate decarboxylase</fullName>
    </alternativeName>
    <alternativeName>
        <fullName evidence="1">KGPDC</fullName>
    </alternativeName>
    <alternativeName>
        <fullName evidence="1">L-ascorbate utilization protein D</fullName>
    </alternativeName>
</protein>
<organism>
    <name type="scientific">Salmonella paratyphi A (strain ATCC 9150 / SARB42)</name>
    <dbReference type="NCBI Taxonomy" id="295319"/>
    <lineage>
        <taxon>Bacteria</taxon>
        <taxon>Pseudomonadati</taxon>
        <taxon>Pseudomonadota</taxon>
        <taxon>Gammaproteobacteria</taxon>
        <taxon>Enterobacterales</taxon>
        <taxon>Enterobacteriaceae</taxon>
        <taxon>Salmonella</taxon>
    </lineage>
</organism>